<organism>
    <name type="scientific">Mus musculus</name>
    <name type="common">Mouse</name>
    <dbReference type="NCBI Taxonomy" id="10090"/>
    <lineage>
        <taxon>Eukaryota</taxon>
        <taxon>Metazoa</taxon>
        <taxon>Chordata</taxon>
        <taxon>Craniata</taxon>
        <taxon>Vertebrata</taxon>
        <taxon>Euteleostomi</taxon>
        <taxon>Mammalia</taxon>
        <taxon>Eutheria</taxon>
        <taxon>Euarchontoglires</taxon>
        <taxon>Glires</taxon>
        <taxon>Rodentia</taxon>
        <taxon>Myomorpha</taxon>
        <taxon>Muroidea</taxon>
        <taxon>Muridae</taxon>
        <taxon>Murinae</taxon>
        <taxon>Mus</taxon>
        <taxon>Mus</taxon>
    </lineage>
</organism>
<proteinExistence type="evidence at protein level"/>
<protein>
    <recommendedName>
        <fullName>Metaxin-1</fullName>
    </recommendedName>
    <alternativeName>
        <fullName>Mitochondrial outer membrane import complex protein 1</fullName>
    </alternativeName>
</protein>
<dbReference type="EMBL" id="L36962">
    <property type="protein sequence ID" value="AAC37672.1"/>
    <property type="molecule type" value="mRNA"/>
</dbReference>
<dbReference type="EMBL" id="U66257">
    <property type="protein sequence ID" value="AAC52818.1"/>
    <property type="molecule type" value="Genomic_DNA"/>
</dbReference>
<dbReference type="EMBL" id="AF059277">
    <property type="protein sequence ID" value="AAC63229.1"/>
    <property type="molecule type" value="Genomic_DNA"/>
</dbReference>
<dbReference type="CCDS" id="CCDS17494.2"/>
<dbReference type="PIR" id="I59379">
    <property type="entry name" value="I59379"/>
</dbReference>
<dbReference type="SMR" id="P47802"/>
<dbReference type="CORUM" id="P47802"/>
<dbReference type="FunCoup" id="P47802">
    <property type="interactions" value="3993"/>
</dbReference>
<dbReference type="IntAct" id="P47802">
    <property type="interactions" value="1"/>
</dbReference>
<dbReference type="STRING" id="10090.ENSMUSP00000073261"/>
<dbReference type="GlyGen" id="P47802">
    <property type="glycosylation" value="1 site, 1 O-linked glycan (1 site)"/>
</dbReference>
<dbReference type="iPTMnet" id="P47802"/>
<dbReference type="PhosphoSitePlus" id="P47802"/>
<dbReference type="SwissPalm" id="P47802"/>
<dbReference type="jPOST" id="P47802"/>
<dbReference type="PaxDb" id="10090-ENSMUSP00000073261"/>
<dbReference type="PeptideAtlas" id="P47802"/>
<dbReference type="ProteomicsDB" id="290123"/>
<dbReference type="Pumba" id="P47802"/>
<dbReference type="AGR" id="MGI:103025"/>
<dbReference type="MGI" id="MGI:103025">
    <property type="gene designation" value="Mtx1"/>
</dbReference>
<dbReference type="eggNOG" id="KOG3028">
    <property type="taxonomic scope" value="Eukaryota"/>
</dbReference>
<dbReference type="InParanoid" id="P47802"/>
<dbReference type="PhylomeDB" id="P47802"/>
<dbReference type="Reactome" id="R-MMU-9013404">
    <property type="pathway name" value="RAC2 GTPase cycle"/>
</dbReference>
<dbReference type="CD-CODE" id="CE726F99">
    <property type="entry name" value="Postsynaptic density"/>
</dbReference>
<dbReference type="PRO" id="PR:P47802"/>
<dbReference type="Proteomes" id="UP000000589">
    <property type="component" value="Unplaced"/>
</dbReference>
<dbReference type="RNAct" id="P47802">
    <property type="molecule type" value="protein"/>
</dbReference>
<dbReference type="GO" id="GO:0005743">
    <property type="term" value="C:mitochondrial inner membrane"/>
    <property type="evidence" value="ECO:0007005"/>
    <property type="project" value="MGI"/>
</dbReference>
<dbReference type="GO" id="GO:0005739">
    <property type="term" value="C:mitochondrion"/>
    <property type="evidence" value="ECO:0007005"/>
    <property type="project" value="MGI"/>
</dbReference>
<dbReference type="GO" id="GO:0001401">
    <property type="term" value="C:SAM complex"/>
    <property type="evidence" value="ECO:0007669"/>
    <property type="project" value="InterPro"/>
</dbReference>
<dbReference type="GO" id="GO:0007005">
    <property type="term" value="P:mitochondrion organization"/>
    <property type="evidence" value="ECO:0007669"/>
    <property type="project" value="InterPro"/>
</dbReference>
<dbReference type="GO" id="GO:0015031">
    <property type="term" value="P:protein transport"/>
    <property type="evidence" value="ECO:0007669"/>
    <property type="project" value="UniProtKB-KW"/>
</dbReference>
<dbReference type="CDD" id="cd03212">
    <property type="entry name" value="GST_C_Metaxin1_3"/>
    <property type="match status" value="1"/>
</dbReference>
<dbReference type="CDD" id="cd03078">
    <property type="entry name" value="GST_N_Metaxin1_like"/>
    <property type="match status" value="1"/>
</dbReference>
<dbReference type="FunFam" id="1.20.1050.10:FF:000058">
    <property type="entry name" value="metaxin-1"/>
    <property type="match status" value="1"/>
</dbReference>
<dbReference type="Gene3D" id="1.20.1050.10">
    <property type="match status" value="1"/>
</dbReference>
<dbReference type="InterPro" id="IPR036282">
    <property type="entry name" value="Glutathione-S-Trfase_C_sf"/>
</dbReference>
<dbReference type="InterPro" id="IPR040079">
    <property type="entry name" value="Glutathione_S-Trfase"/>
</dbReference>
<dbReference type="InterPro" id="IPR017410">
    <property type="entry name" value="Metaxin1/3"/>
</dbReference>
<dbReference type="InterPro" id="IPR033468">
    <property type="entry name" value="Metaxin_GST"/>
</dbReference>
<dbReference type="InterPro" id="IPR050931">
    <property type="entry name" value="Mito_Protein_Transport_Metaxin"/>
</dbReference>
<dbReference type="InterPro" id="IPR019564">
    <property type="entry name" value="Sam37/metaxin_N"/>
</dbReference>
<dbReference type="PANTHER" id="PTHR12289">
    <property type="entry name" value="METAXIN RELATED"/>
    <property type="match status" value="1"/>
</dbReference>
<dbReference type="PANTHER" id="PTHR12289:SF34">
    <property type="entry name" value="METAXIN-1"/>
    <property type="match status" value="1"/>
</dbReference>
<dbReference type="Pfam" id="PF17171">
    <property type="entry name" value="GST_C_6"/>
    <property type="match status" value="1"/>
</dbReference>
<dbReference type="Pfam" id="PF10568">
    <property type="entry name" value="Tom37"/>
    <property type="match status" value="1"/>
</dbReference>
<dbReference type="PIRSF" id="PIRSF038150">
    <property type="entry name" value="Metaxin"/>
    <property type="match status" value="1"/>
</dbReference>
<dbReference type="SFLD" id="SFLDS00019">
    <property type="entry name" value="Glutathione_Transferase_(cytos"/>
    <property type="match status" value="1"/>
</dbReference>
<dbReference type="SFLD" id="SFLDG01180">
    <property type="entry name" value="SUF1"/>
    <property type="match status" value="1"/>
</dbReference>
<dbReference type="SUPFAM" id="SSF47616">
    <property type="entry name" value="GST C-terminal domain-like"/>
    <property type="match status" value="1"/>
</dbReference>
<gene>
    <name type="primary">Mtx1</name>
    <name type="synonym">Mtx</name>
    <name type="synonym">Mtxn</name>
</gene>
<comment type="function">
    <text evidence="4">Involved in transport of proteins into the mitochondrion. Essential for embryonic development.</text>
</comment>
<comment type="subunit">
    <text evidence="1 3">Interacts with MTX2/metaxin-2 (PubMed:10381257). Associates with the mitochondrial contact site and cristae organizing system (MICOS) complex, composed of at least MICOS10/MIC10, CHCHD3/MIC19, CHCHD6/MIC25, APOOL/MIC27, IMMT/MIC60, APOO/MIC23/MIC26 and QIL1/MIC13 (By similarity). This complex was also known under the names MINOS or MitOS complex (By similarity). The MICOS complex associates with mitochondrial outer membrane proteins SAMM50, MTX1 and MTX2 (together described as components of the mitochondrial outer membrane sorting assembly machinery (SAM) complex) and DNAJC11, mitochondrial inner membrane protein TMEM11 and with HSPA9 (By similarity). The MICOS and SAM complexes together with DNAJC11 are part of a large protein complex spanning both membranes termed the mitochondrial intermembrane space bridging (MIB) complex (By similarity). Interacts with ARMC1 (By similarity).</text>
</comment>
<comment type="subcellular location">
    <subcellularLocation>
        <location evidence="4">Mitochondrion outer membrane</location>
    </subcellularLocation>
</comment>
<comment type="tissue specificity">
    <text>Ubiquitous. Higher levels are seen in the kidney as compared to other tissues.</text>
</comment>
<comment type="PTM">
    <text evidence="1">Ubiquitinated by PRKN during mitophagy, leading to its degradation and enhancement of mitophagy. Deubiquitinated by USP30.</text>
</comment>
<comment type="similarity">
    <text evidence="5">Belongs to the metaxin family.</text>
</comment>
<accession>P47802</accession>
<name>MTX1_MOUSE</name>
<evidence type="ECO:0000250" key="1">
    <source>
        <dbReference type="UniProtKB" id="Q13505"/>
    </source>
</evidence>
<evidence type="ECO:0000255" key="2"/>
<evidence type="ECO:0000269" key="3">
    <source>
    </source>
</evidence>
<evidence type="ECO:0000269" key="4">
    <source>
    </source>
</evidence>
<evidence type="ECO:0000305" key="5"/>
<sequence>MAAPMELFCWSGGWGLPSVDLDSLAVLTYTRFTGAPLKIHKTSNPWQSPSGTLPALRTSDGKVITVPDKIITHLRKEKYNADYDLSARQGADTLAFMSLLEEKLLPVLIHTFWIDAKNYVEVTRKWYAEAMPFPLNFFLPGRMQRQYMERLQLLCGEHKSENEEELEKELYQEARECLTLLSQRLGSQKFFFGDAPASLDAFVFSHLALLLQAKLPSGKLQAHLRGLHNLCAYCTHILNLYFPRDGDEVPLPRQTPAAPETEEEPYRRRTQILSVLAGLAAMVGYALLSGIVSIQRTSPARAPGTRALGLAEEDEED</sequence>
<feature type="chain" id="PRO_0000220992" description="Metaxin-1">
    <location>
        <begin position="1"/>
        <end position="317"/>
    </location>
</feature>
<feature type="transmembrane region" description="Helical" evidence="2">
    <location>
        <begin position="272"/>
        <end position="292"/>
    </location>
</feature>
<feature type="cross-link" description="Glycyl lysine isopeptide (Lys-Gly) (interchain with G-Cter in ubiquitin)" evidence="1">
    <location>
        <position position="38"/>
    </location>
</feature>
<feature type="cross-link" description="Glycyl lysine isopeptide (Lys-Gly) (interchain with G-Cter in ubiquitin)" evidence="1">
    <location>
        <position position="41"/>
    </location>
</feature>
<feature type="cross-link" description="Glycyl lysine isopeptide (Lys-Gly) (interchain with G-Cter in ubiquitin)" evidence="1">
    <location>
        <position position="78"/>
    </location>
</feature>
<feature type="cross-link" description="Glycyl lysine isopeptide (Lys-Gly) (interchain with G-Cter in ubiquitin)" evidence="1">
    <location>
        <position position="168"/>
    </location>
</feature>
<keyword id="KW-0903">Direct protein sequencing</keyword>
<keyword id="KW-1017">Isopeptide bond</keyword>
<keyword id="KW-0472">Membrane</keyword>
<keyword id="KW-0496">Mitochondrion</keyword>
<keyword id="KW-1000">Mitochondrion outer membrane</keyword>
<keyword id="KW-0653">Protein transport</keyword>
<keyword id="KW-1185">Reference proteome</keyword>
<keyword id="KW-0812">Transmembrane</keyword>
<keyword id="KW-1133">Transmembrane helix</keyword>
<keyword id="KW-0813">Transport</keyword>
<keyword id="KW-0832">Ubl conjugation</keyword>
<reference key="1">
    <citation type="journal article" date="1995" name="Proc. Natl. Acad. Sci. U.S.A.">
        <title>Metaxin, a gene contiguous to both thrombospondin 3 and glucocerebrosidase, is required for embryonic development in the mouse: implications for Gaucher disease.</title>
        <authorList>
            <person name="Bornstein P."/>
            <person name="McKinney C.E."/>
            <person name="Lamarca M.E."/>
            <person name="Winfield S."/>
            <person name="Shingu T."/>
            <person name="Devarayalu S."/>
            <person name="Vos H.L."/>
            <person name="Ginns E.I."/>
        </authorList>
    </citation>
    <scope>NUCLEOTIDE SEQUENCE [MRNA]</scope>
    <source>
        <strain>C57BL/6J</strain>
        <tissue>Brain</tissue>
    </source>
</reference>
<reference key="2">
    <citation type="journal article" date="1996" name="Nucleic Acids Res.">
        <title>SP1-binding elements, within the common metaxin-thrombospondin 3 intergenic region, participate in the regulation of the metaxin gene.</title>
        <authorList>
            <person name="Collins M."/>
            <person name="Bornstein P."/>
        </authorList>
    </citation>
    <scope>NUCLEOTIDE SEQUENCE [GENOMIC DNA] OF 1-27</scope>
</reference>
<reference key="3">
    <citation type="submission" date="2007-04" db="UniProtKB">
        <authorList>
            <person name="Lubec G."/>
            <person name="Kang S.U."/>
        </authorList>
    </citation>
    <scope>PROTEIN SEQUENCE OF 89-103; 118-124 AND 169-175</scope>
    <scope>IDENTIFICATION BY MASS SPECTROMETRY</scope>
    <source>
        <strain>C57BL/6J</strain>
        <tissue>Brain</tissue>
    </source>
</reference>
<reference key="4">
    <citation type="journal article" date="1998" name="J. Biol. Chem.">
        <title>A far upstream, cell type-specific enhancer of the mouse thrombospondin 3 gene is located within intron 6 of the adjacent metaxin gene.</title>
        <authorList>
            <person name="Collins M."/>
            <person name="Rojnuckarin P."/>
            <person name="Zhu Y.H."/>
            <person name="Bornstein P."/>
        </authorList>
    </citation>
    <scope>NUCLEOTIDE SEQUENCE [GENOMIC DNA] OF 109-317</scope>
</reference>
<reference key="5">
    <citation type="journal article" date="1997" name="J. Biol. Chem.">
        <title>Metaxin is a component of a preprotein import complex in the outer membrane of the mammalian mitochondrion.</title>
        <authorList>
            <person name="Armstrong L.C."/>
            <person name="Komiya T."/>
            <person name="Bergman B.E."/>
            <person name="Mihara K."/>
            <person name="Bornstein P."/>
        </authorList>
    </citation>
    <scope>FUNCTION</scope>
    <scope>SUBCELLULAR LOCATION</scope>
</reference>
<reference key="6">
    <citation type="journal article" date="1999" name="J. Cell. Biochem.">
        <title>Metaxin 1 interacts with metaxin 2, a novel related protein associated with the mammalian mitochondrial outer membrane.</title>
        <authorList>
            <person name="Armstrong L.C."/>
            <person name="Saenz A.J."/>
            <person name="Bornstein P."/>
        </authorList>
    </citation>
    <scope>INTERACTION WITH MTX2</scope>
</reference>
<reference key="7">
    <citation type="journal article" date="2010" name="Cell">
        <title>A tissue-specific atlas of mouse protein phosphorylation and expression.</title>
        <authorList>
            <person name="Huttlin E.L."/>
            <person name="Jedrychowski M.P."/>
            <person name="Elias J.E."/>
            <person name="Goswami T."/>
            <person name="Rad R."/>
            <person name="Beausoleil S.A."/>
            <person name="Villen J."/>
            <person name="Haas W."/>
            <person name="Sowa M.E."/>
            <person name="Gygi S.P."/>
        </authorList>
    </citation>
    <scope>IDENTIFICATION BY MASS SPECTROMETRY [LARGE SCALE ANALYSIS]</scope>
    <source>
        <tissue>Brain</tissue>
        <tissue>Brown adipose tissue</tissue>
        <tissue>Heart</tissue>
        <tissue>Kidney</tissue>
        <tissue>Liver</tissue>
        <tissue>Lung</tissue>
        <tissue>Spleen</tissue>
        <tissue>Testis</tissue>
    </source>
</reference>